<comment type="function">
    <text evidence="1">May play a role in response to oxidative stress and polyamine biosynthesis.</text>
</comment>
<comment type="subunit">
    <text evidence="1">Monomer and homodimer.</text>
</comment>
<comment type="subcellular location">
    <subcellularLocation>
        <location>Cytoplasm</location>
        <location>Cytosol</location>
    </subcellularLocation>
    <text>In the cytosol of the cotyledon cells rather than in vacuoles or protein bodies.</text>
</comment>
<dbReference type="EMBL" id="M13791">
    <property type="protein sequence ID" value="AAA02981.1"/>
    <property type="molecule type" value="mRNA"/>
</dbReference>
<dbReference type="EMBL" id="M17147">
    <property type="protein sequence ID" value="AAA33641.1"/>
    <property type="molecule type" value="mRNA"/>
</dbReference>
<dbReference type="PIR" id="S06248">
    <property type="entry name" value="S06248"/>
</dbReference>
<dbReference type="RefSeq" id="NP_001414604.1">
    <property type="nucleotide sequence ID" value="NM_001427675.1"/>
</dbReference>
<dbReference type="SMR" id="P08688"/>
<dbReference type="Allergome" id="9589">
    <property type="allergen name" value="Pis s Albumin"/>
</dbReference>
<dbReference type="EnsemblPlants" id="Psat0s876g0120.1">
    <property type="protein sequence ID" value="Psat0s876g0120.1.cds"/>
    <property type="gene ID" value="Psat0s876g0120"/>
</dbReference>
<dbReference type="EnsemblPlants" id="Psat0s876g0120.2">
    <property type="protein sequence ID" value="Psat0s876g0120.2.cds"/>
    <property type="gene ID" value="Psat0s876g0120"/>
</dbReference>
<dbReference type="GeneID" id="127128401"/>
<dbReference type="Gramene" id="Psat0s876g0120.1">
    <property type="protein sequence ID" value="Psat0s876g0120.1.cds"/>
    <property type="gene ID" value="Psat0s876g0120"/>
</dbReference>
<dbReference type="Gramene" id="Psat0s876g0120.2">
    <property type="protein sequence ID" value="Psat0s876g0120.2.cds"/>
    <property type="gene ID" value="Psat0s876g0120"/>
</dbReference>
<dbReference type="OrthoDB" id="756060at2759"/>
<dbReference type="GO" id="GO:0005829">
    <property type="term" value="C:cytosol"/>
    <property type="evidence" value="ECO:0007669"/>
    <property type="project" value="UniProtKB-SubCell"/>
</dbReference>
<dbReference type="GO" id="GO:0005509">
    <property type="term" value="F:calcium ion binding"/>
    <property type="evidence" value="ECO:0000250"/>
    <property type="project" value="UniProtKB"/>
</dbReference>
<dbReference type="GO" id="GO:0045735">
    <property type="term" value="F:nutrient reservoir activity"/>
    <property type="evidence" value="ECO:0007669"/>
    <property type="project" value="UniProtKB-KW"/>
</dbReference>
<dbReference type="CDD" id="cd00094">
    <property type="entry name" value="HX"/>
    <property type="match status" value="1"/>
</dbReference>
<dbReference type="FunFam" id="2.110.10.10:FF:000051">
    <property type="entry name" value="Albumin-2"/>
    <property type="match status" value="1"/>
</dbReference>
<dbReference type="Gene3D" id="2.110.10.10">
    <property type="entry name" value="Hemopexin-like domain"/>
    <property type="match status" value="1"/>
</dbReference>
<dbReference type="InterPro" id="IPR000585">
    <property type="entry name" value="Hemopexin-like_dom"/>
</dbReference>
<dbReference type="InterPro" id="IPR036375">
    <property type="entry name" value="Hemopexin-like_dom_sf"/>
</dbReference>
<dbReference type="InterPro" id="IPR018487">
    <property type="entry name" value="Hemopexin-like_repeat"/>
</dbReference>
<dbReference type="Pfam" id="PF00045">
    <property type="entry name" value="Hemopexin"/>
    <property type="match status" value="2"/>
</dbReference>
<dbReference type="SMART" id="SM00120">
    <property type="entry name" value="HX"/>
    <property type="match status" value="3"/>
</dbReference>
<dbReference type="SUPFAM" id="SSF50923">
    <property type="entry name" value="Hemopexin-like domain"/>
    <property type="match status" value="1"/>
</dbReference>
<dbReference type="PROSITE" id="PS51642">
    <property type="entry name" value="HEMOPEXIN_2"/>
    <property type="match status" value="4"/>
</dbReference>
<accession>P08688</accession>
<feature type="chain" id="PRO_0000102594" description="Albumin-2">
    <location>
        <begin position="1"/>
        <end position="231"/>
    </location>
</feature>
<feature type="repeat" description="Hemopexin 1">
    <location>
        <begin position="4"/>
        <end position="55"/>
    </location>
</feature>
<feature type="repeat" description="Hemopexin 2">
    <location>
        <begin position="62"/>
        <end position="112"/>
    </location>
</feature>
<feature type="repeat" description="Hemopexin 3">
    <location>
        <begin position="118"/>
        <end position="166"/>
    </location>
</feature>
<feature type="repeat" description="Hemopexin 4">
    <location>
        <begin position="172"/>
        <end position="223"/>
    </location>
</feature>
<feature type="binding site" evidence="1">
    <location>
        <position position="8"/>
    </location>
    <ligand>
        <name>Ca(2+)</name>
        <dbReference type="ChEBI" id="CHEBI:29108"/>
    </ligand>
</feature>
<feature type="binding site" evidence="1">
    <location>
        <position position="66"/>
    </location>
    <ligand>
        <name>Ca(2+)</name>
        <dbReference type="ChEBI" id="CHEBI:29108"/>
    </ligand>
</feature>
<feature type="binding site" evidence="1">
    <location>
        <position position="122"/>
    </location>
    <ligand>
        <name>Ca(2+)</name>
        <dbReference type="ChEBI" id="CHEBI:29108"/>
    </ligand>
</feature>
<feature type="binding site" evidence="1">
    <location>
        <position position="176"/>
    </location>
    <ligand>
        <name>Ca(2+)</name>
        <dbReference type="ChEBI" id="CHEBI:29108"/>
    </ligand>
</feature>
<feature type="sequence variant">
    <original>TV</original>
    <variation>YI</variation>
    <location>
        <begin position="58"/>
        <end position="59"/>
    </location>
</feature>
<sequence>MTKTGYINAAFRSSQNNEAYLFINDKYVLLDYAPGTSNDKVLYGPTPVRDGFKSLNQTVFGSYGVDCSFDTDNDEAFIFYEKFCALIDYAPHSNKDKIILGPKKIADMFPFFEGTVFENGIDAAYRSTRGKEVYLFKGDQYARIDYETNSMVNKEIKSIRNGFPCFRNTIFESGTDAAFASHKTNEVYFFKGDYYARVTVTPGATDDQIMDGVRKTLDYWPSLRGIIPLEN</sequence>
<protein>
    <recommendedName>
        <fullName>Albumin-2</fullName>
    </recommendedName>
    <alternativeName>
        <fullName>PA2</fullName>
    </alternativeName>
</protein>
<proteinExistence type="evidence at transcript level"/>
<name>ALB2_PEA</name>
<organism>
    <name type="scientific">Pisum sativum</name>
    <name type="common">Garden pea</name>
    <name type="synonym">Lathyrus oleraceus</name>
    <dbReference type="NCBI Taxonomy" id="3888"/>
    <lineage>
        <taxon>Eukaryota</taxon>
        <taxon>Viridiplantae</taxon>
        <taxon>Streptophyta</taxon>
        <taxon>Embryophyta</taxon>
        <taxon>Tracheophyta</taxon>
        <taxon>Spermatophyta</taxon>
        <taxon>Magnoliopsida</taxon>
        <taxon>eudicotyledons</taxon>
        <taxon>Gunneridae</taxon>
        <taxon>Pentapetalae</taxon>
        <taxon>rosids</taxon>
        <taxon>fabids</taxon>
        <taxon>Fabales</taxon>
        <taxon>Fabaceae</taxon>
        <taxon>Papilionoideae</taxon>
        <taxon>50 kb inversion clade</taxon>
        <taxon>NPAAA clade</taxon>
        <taxon>Hologalegina</taxon>
        <taxon>IRL clade</taxon>
        <taxon>Fabeae</taxon>
        <taxon>Pisum</taxon>
    </lineage>
</organism>
<keyword id="KW-0106">Calcium</keyword>
<keyword id="KW-0963">Cytoplasm</keyword>
<keyword id="KW-0479">Metal-binding</keyword>
<keyword id="KW-0677">Repeat</keyword>
<keyword id="KW-0708">Seed storage protein</keyword>
<keyword id="KW-0758">Storage protein</keyword>
<reference key="1">
    <citation type="journal article" date="1987" name="Plant Mol. Biol.">
        <title>cDNA and protein sequence of a major pea seed albumin (PA 2: Mr ~26000).</title>
        <authorList>
            <person name="Higgins T.J.V."/>
            <person name="Beach L.R."/>
            <person name="Spencer D."/>
            <person name="Chandler P.M."/>
            <person name="Randall P.J."/>
            <person name="Blagrove R.J."/>
            <person name="Kortt A.A."/>
            <person name="Guthrie R.E."/>
        </authorList>
    </citation>
    <scope>NUCLEOTIDE SEQUENCE [MRNA]</scope>
    <source>
        <tissue>Seed</tissue>
    </source>
</reference>
<evidence type="ECO:0000250" key="1"/>